<evidence type="ECO:0000255" key="1">
    <source>
        <dbReference type="HAMAP-Rule" id="MF_01357"/>
    </source>
</evidence>
<feature type="chain" id="PRO_0000358121" description="NADH-quinone oxidoreductase subunit C">
    <location>
        <begin position="1"/>
        <end position="200"/>
    </location>
</feature>
<comment type="function">
    <text evidence="1">NDH-1 shuttles electrons from NADH, via FMN and iron-sulfur (Fe-S) centers, to quinones in the respiratory chain. The immediate electron acceptor for the enzyme in this species is believed to be ubiquinone. Couples the redox reaction to proton translocation (for every two electrons transferred, four hydrogen ions are translocated across the cytoplasmic membrane), and thus conserves the redox energy in a proton gradient.</text>
</comment>
<comment type="catalytic activity">
    <reaction evidence="1">
        <text>a quinone + NADH + 5 H(+)(in) = a quinol + NAD(+) + 4 H(+)(out)</text>
        <dbReference type="Rhea" id="RHEA:57888"/>
        <dbReference type="ChEBI" id="CHEBI:15378"/>
        <dbReference type="ChEBI" id="CHEBI:24646"/>
        <dbReference type="ChEBI" id="CHEBI:57540"/>
        <dbReference type="ChEBI" id="CHEBI:57945"/>
        <dbReference type="ChEBI" id="CHEBI:132124"/>
    </reaction>
</comment>
<comment type="subunit">
    <text evidence="1">NDH-1 is composed of 14 different subunits. Subunits NuoB, C, D, E, F, and G constitute the peripheral sector of the complex.</text>
</comment>
<comment type="subcellular location">
    <subcellularLocation>
        <location evidence="1">Cell inner membrane</location>
        <topology evidence="1">Peripheral membrane protein</topology>
        <orientation evidence="1">Cytoplasmic side</orientation>
    </subcellularLocation>
</comment>
<comment type="similarity">
    <text evidence="1">Belongs to the complex I 30 kDa subunit family.</text>
</comment>
<keyword id="KW-0997">Cell inner membrane</keyword>
<keyword id="KW-1003">Cell membrane</keyword>
<keyword id="KW-0472">Membrane</keyword>
<keyword id="KW-0520">NAD</keyword>
<keyword id="KW-0874">Quinone</keyword>
<keyword id="KW-1185">Reference proteome</keyword>
<keyword id="KW-1278">Translocase</keyword>
<keyword id="KW-0813">Transport</keyword>
<keyword id="KW-0830">Ubiquinone</keyword>
<gene>
    <name evidence="1" type="primary">nuoC</name>
    <name type="ordered locus">Mmar10_1357</name>
</gene>
<sequence length="200" mass="23283">MSEALKVLGEHIANAQDAAVTGWSIANGELTVEIHRDRIETVLTWLRDDPACRFTTLIDICGVDYPQRAERFEVVYHLLSMHQNHRIRVKLSTDEEAPVPTVIPVYPVADWFEREAFDMYGIVFADHPDLRRLLTDYGFEGYPLRKDFPLTGYVEVRWDEEEKRVVYEPVELVQEYRDFDFMSPWEGAKYILPGDEKAEG</sequence>
<name>NUOC_MARMM</name>
<protein>
    <recommendedName>
        <fullName evidence="1">NADH-quinone oxidoreductase subunit C</fullName>
        <ecNumber evidence="1">7.1.1.-</ecNumber>
    </recommendedName>
    <alternativeName>
        <fullName evidence="1">NADH dehydrogenase I subunit C</fullName>
    </alternativeName>
    <alternativeName>
        <fullName evidence="1">NDH-1 subunit C</fullName>
    </alternativeName>
</protein>
<organism>
    <name type="scientific">Maricaulis maris (strain MCS10)</name>
    <name type="common">Caulobacter maris</name>
    <dbReference type="NCBI Taxonomy" id="394221"/>
    <lineage>
        <taxon>Bacteria</taxon>
        <taxon>Pseudomonadati</taxon>
        <taxon>Pseudomonadota</taxon>
        <taxon>Alphaproteobacteria</taxon>
        <taxon>Maricaulales</taxon>
        <taxon>Maricaulaceae</taxon>
        <taxon>Maricaulis</taxon>
    </lineage>
</organism>
<dbReference type="EC" id="7.1.1.-" evidence="1"/>
<dbReference type="EMBL" id="CP000449">
    <property type="protein sequence ID" value="ABI65649.1"/>
    <property type="molecule type" value="Genomic_DNA"/>
</dbReference>
<dbReference type="RefSeq" id="WP_011643296.1">
    <property type="nucleotide sequence ID" value="NC_008347.1"/>
</dbReference>
<dbReference type="SMR" id="Q0APY8"/>
<dbReference type="STRING" id="394221.Mmar10_1357"/>
<dbReference type="KEGG" id="mmr:Mmar10_1357"/>
<dbReference type="eggNOG" id="COG0852">
    <property type="taxonomic scope" value="Bacteria"/>
</dbReference>
<dbReference type="HOGENOM" id="CLU_042628_2_1_5"/>
<dbReference type="OrthoDB" id="9803286at2"/>
<dbReference type="Proteomes" id="UP000001964">
    <property type="component" value="Chromosome"/>
</dbReference>
<dbReference type="GO" id="GO:0005886">
    <property type="term" value="C:plasma membrane"/>
    <property type="evidence" value="ECO:0007669"/>
    <property type="project" value="UniProtKB-SubCell"/>
</dbReference>
<dbReference type="GO" id="GO:0008137">
    <property type="term" value="F:NADH dehydrogenase (ubiquinone) activity"/>
    <property type="evidence" value="ECO:0007669"/>
    <property type="project" value="InterPro"/>
</dbReference>
<dbReference type="GO" id="GO:0050136">
    <property type="term" value="F:NADH:ubiquinone reductase (non-electrogenic) activity"/>
    <property type="evidence" value="ECO:0007669"/>
    <property type="project" value="UniProtKB-UniRule"/>
</dbReference>
<dbReference type="GO" id="GO:0048038">
    <property type="term" value="F:quinone binding"/>
    <property type="evidence" value="ECO:0007669"/>
    <property type="project" value="UniProtKB-KW"/>
</dbReference>
<dbReference type="Gene3D" id="3.30.460.80">
    <property type="entry name" value="NADH:ubiquinone oxidoreductase, 30kDa subunit"/>
    <property type="match status" value="1"/>
</dbReference>
<dbReference type="HAMAP" id="MF_01357">
    <property type="entry name" value="NDH1_NuoC"/>
    <property type="match status" value="1"/>
</dbReference>
<dbReference type="InterPro" id="IPR010218">
    <property type="entry name" value="NADH_DH_suC"/>
</dbReference>
<dbReference type="InterPro" id="IPR037232">
    <property type="entry name" value="NADH_quin_OxRdtase_su_C/D-like"/>
</dbReference>
<dbReference type="InterPro" id="IPR001268">
    <property type="entry name" value="NADH_UbQ_OxRdtase_30kDa_su"/>
</dbReference>
<dbReference type="InterPro" id="IPR020396">
    <property type="entry name" value="NADH_UbQ_OxRdtase_CS"/>
</dbReference>
<dbReference type="NCBIfam" id="TIGR01961">
    <property type="entry name" value="NuoC_fam"/>
    <property type="match status" value="1"/>
</dbReference>
<dbReference type="NCBIfam" id="NF004730">
    <property type="entry name" value="PRK06074.1-1"/>
    <property type="match status" value="1"/>
</dbReference>
<dbReference type="NCBIfam" id="NF004733">
    <property type="entry name" value="PRK06074.1-5"/>
    <property type="match status" value="1"/>
</dbReference>
<dbReference type="PANTHER" id="PTHR10884:SF14">
    <property type="entry name" value="NADH DEHYDROGENASE [UBIQUINONE] IRON-SULFUR PROTEIN 3, MITOCHONDRIAL"/>
    <property type="match status" value="1"/>
</dbReference>
<dbReference type="PANTHER" id="PTHR10884">
    <property type="entry name" value="NADH DEHYDROGENASE UBIQUINONE IRON-SULFUR PROTEIN 3"/>
    <property type="match status" value="1"/>
</dbReference>
<dbReference type="Pfam" id="PF00329">
    <property type="entry name" value="Complex1_30kDa"/>
    <property type="match status" value="1"/>
</dbReference>
<dbReference type="SUPFAM" id="SSF143243">
    <property type="entry name" value="Nqo5-like"/>
    <property type="match status" value="1"/>
</dbReference>
<dbReference type="PROSITE" id="PS00542">
    <property type="entry name" value="COMPLEX1_30K"/>
    <property type="match status" value="1"/>
</dbReference>
<proteinExistence type="inferred from homology"/>
<accession>Q0APY8</accession>
<reference key="1">
    <citation type="submission" date="2006-08" db="EMBL/GenBank/DDBJ databases">
        <title>Complete sequence of Maricaulis maris MCS10.</title>
        <authorList>
            <consortium name="US DOE Joint Genome Institute"/>
            <person name="Copeland A."/>
            <person name="Lucas S."/>
            <person name="Lapidus A."/>
            <person name="Barry K."/>
            <person name="Detter J.C."/>
            <person name="Glavina del Rio T."/>
            <person name="Hammon N."/>
            <person name="Israni S."/>
            <person name="Dalin E."/>
            <person name="Tice H."/>
            <person name="Pitluck S."/>
            <person name="Saunders E."/>
            <person name="Brettin T."/>
            <person name="Bruce D."/>
            <person name="Han C."/>
            <person name="Tapia R."/>
            <person name="Gilna P."/>
            <person name="Schmutz J."/>
            <person name="Larimer F."/>
            <person name="Land M."/>
            <person name="Hauser L."/>
            <person name="Kyrpides N."/>
            <person name="Mikhailova N."/>
            <person name="Viollier P."/>
            <person name="Stephens C."/>
            <person name="Richardson P."/>
        </authorList>
    </citation>
    <scope>NUCLEOTIDE SEQUENCE [LARGE SCALE GENOMIC DNA]</scope>
    <source>
        <strain>MCS10</strain>
    </source>
</reference>